<name>CPT1C_MOUSE</name>
<keyword id="KW-0012">Acyltransferase</keyword>
<keyword id="KW-0966">Cell projection</keyword>
<keyword id="KW-0256">Endoplasmic reticulum</keyword>
<keyword id="KW-0276">Fatty acid metabolism</keyword>
<keyword id="KW-0378">Hydrolase</keyword>
<keyword id="KW-0443">Lipid metabolism</keyword>
<keyword id="KW-0472">Membrane</keyword>
<keyword id="KW-1185">Reference proteome</keyword>
<keyword id="KW-0770">Synapse</keyword>
<keyword id="KW-0808">Transferase</keyword>
<keyword id="KW-0812">Transmembrane</keyword>
<keyword id="KW-1133">Transmembrane helix</keyword>
<sequence length="798" mass="90030">MAEAHQASSLLSSLSSDGAEVELSSPVWQEIYLCALRSWKRHLWRVWNDFLAGVVPATPLSWLFLFSTIQLACLLQLDPSLGLMEKIKELLPDWGGQHHQLQGFLSAAVFASCLWGALIFTLHVALRLLLSHHGWLLEPHGAMSSPTKTWLALVRIFSGRHPRLFSFQRALPRQPVPSAQETVRKYLESVRPVLGDDAFDRATALANDFLRLHAPRLQLYLQLKSWCTSNYVSDWWEEFVYLRSRGSLINSTYYMMDFLYVTPTPLQAARAGNAVHTLLLYRHLLNRQEISPTLLMGMRPLCSAQYERMFNTTRIPGVEKDHLRHLQDSRHVAVFHRGRFFRVGTHSPNGLLSPRALEQQFQDILDDPSPACPLEEHLAALTAAPRSMWAQVRESVKTHAATALEAVEGAAFFVSLDSEPAGLTREDPAASLDAYAHALLAGRGHDRWFDKSFTLIVFSNGKLGLSVEHSWADCPVSGHLWEFTLATECFQLGYATDGHCKGHPDPTLPQPQRLQWDLPEQIQPSISLALRGAKTLSGNIDCHVFPFSHFGKSFIKCCHVSSDSFIQLVLQLAHFRDRGQFCLTYESAMTRLFLEGRTETVRSCTREACQFVRAMDNKETDQHCLALFRVAVDKHQALLKAAMSGQGIDRHLFALYIMSRLLHMQSPFLTQVQSQQWLLSTSQVPVQQTHLIDVHNYPDYVSSGGGFGPAHDHGYGISYIFMGENAITFHISSKKSSTETDSHRLGQHIENALLDVASLFRVGQHFKRQFRGENSDYRYNFLSCKTVDPNTPTSSTNL</sequence>
<evidence type="ECO:0000250" key="1">
    <source>
        <dbReference type="UniProtKB" id="P18886"/>
    </source>
</evidence>
<evidence type="ECO:0000250" key="2">
    <source>
        <dbReference type="UniProtKB" id="Q8TCG5"/>
    </source>
</evidence>
<evidence type="ECO:0000255" key="3"/>
<evidence type="ECO:0000269" key="4">
    <source>
    </source>
</evidence>
<evidence type="ECO:0000269" key="5">
    <source>
    </source>
</evidence>
<evidence type="ECO:0000269" key="6">
    <source>
    </source>
</evidence>
<evidence type="ECO:0000269" key="7">
    <source>
    </source>
</evidence>
<evidence type="ECO:0000269" key="8">
    <source>
    </source>
</evidence>
<evidence type="ECO:0000269" key="9">
    <source>
    </source>
</evidence>
<evidence type="ECO:0000269" key="10">
    <source>
    </source>
</evidence>
<evidence type="ECO:0000269" key="11">
    <source>
    </source>
</evidence>
<evidence type="ECO:0000269" key="12">
    <source>
    </source>
</evidence>
<evidence type="ECO:0000303" key="13">
    <source>
    </source>
</evidence>
<evidence type="ECO:0000305" key="14"/>
<evidence type="ECO:0000305" key="15">
    <source>
    </source>
</evidence>
<organism>
    <name type="scientific">Mus musculus</name>
    <name type="common">Mouse</name>
    <dbReference type="NCBI Taxonomy" id="10090"/>
    <lineage>
        <taxon>Eukaryota</taxon>
        <taxon>Metazoa</taxon>
        <taxon>Chordata</taxon>
        <taxon>Craniata</taxon>
        <taxon>Vertebrata</taxon>
        <taxon>Euteleostomi</taxon>
        <taxon>Mammalia</taxon>
        <taxon>Eutheria</taxon>
        <taxon>Euarchontoglires</taxon>
        <taxon>Glires</taxon>
        <taxon>Rodentia</taxon>
        <taxon>Myomorpha</taxon>
        <taxon>Muroidea</taxon>
        <taxon>Muridae</taxon>
        <taxon>Murinae</taxon>
        <taxon>Mus</taxon>
        <taxon>Mus</taxon>
    </lineage>
</organism>
<comment type="function">
    <text evidence="2 4 5 7 9 10 11 12">Palmitoyl thioesterase specifically expressed in the endoplasmic reticulum of neurons. Modulates the trafficking of the glutamate receptor, AMPAR, to plasma membrane through depalmitoylation of GRIA1 (By similarity). Also regulates AMPR trafficking through the regulation of SACM1L phosphatidylinositol-3-phosphatase activity by interaction in a malonyl-CoA dependent manner (PubMed:32931550). Binds malonyl-CoA and couples malonyl-CoA to ceramide levels, necessary for proper spine maturation and contributing to systemic energy homeostasis and appetite control (PubMed:16651524, PubMed:22539351, PubMed:37309891). Binds to palmitoyl-CoA, but does not have carnitine palmitoyltransferase 1 catalytic activity or at very low levels (PubMed:12376098, PubMed:25751282, PubMed:30135643).</text>
</comment>
<comment type="catalytic activity">
    <reaction evidence="2">
        <text>S-hexadecanoyl-L-cysteinyl-[protein] + H2O = L-cysteinyl-[protein] + hexadecanoate + H(+)</text>
        <dbReference type="Rhea" id="RHEA:19233"/>
        <dbReference type="Rhea" id="RHEA-COMP:10131"/>
        <dbReference type="Rhea" id="RHEA-COMP:11032"/>
        <dbReference type="ChEBI" id="CHEBI:7896"/>
        <dbReference type="ChEBI" id="CHEBI:15377"/>
        <dbReference type="ChEBI" id="CHEBI:15378"/>
        <dbReference type="ChEBI" id="CHEBI:29950"/>
        <dbReference type="ChEBI" id="CHEBI:74151"/>
        <dbReference type="EC" id="3.1.2.22"/>
    </reaction>
    <physiologicalReaction direction="left-to-right" evidence="2">
        <dbReference type="Rhea" id="RHEA:19234"/>
    </physiologicalReaction>
</comment>
<comment type="subunit">
    <text evidence="2 8 11">Peripherally associated with AMPAR complex. AMPAR complex consists of an inner core made of 4 pore-forming GluA/GRIA proteins (GRIA1, GRIA2, GRIA3 and GRIA4) and 4 major auxiliary subunits arranged in a twofold symmetry. One of the two pairs of distinct binding sites is occupied either by CNIH2, CNIH3 or CACNG2, CACNG3. The other harbors CACNG2, CACNG3, CACNG4, CACNG8 or GSG1L. This inner core of AMPAR complex is complemented by outer core constituents binding directly to the GluA/GRIA proteins at sites distinct from the interaction sites of the inner core constituents. Outer core constituents include at least PRRT1, PRRT2, CKAMP44/SHISA9, FRRS1L and NRN1. The proteins of the inner and outer core serve as a platform for other, more peripherally associated AMPAR constituents, including CPT1C. Alone or in combination, these auxiliary subunits control the gating and pharmacology of the AMPAR complex and profoundly impact their biogenesis and protein processing (PubMed:32931550). Interacts with SACM1L; the interaction regulates SACM1L phosphatidylinositol-3-phosphatase activity and translocation to endoplasmic reticulum/trans Golgi network in a malonyl-CoA dependent manner (PubMed:32931550). Interacts with ATL1 (By similarity).</text>
</comment>
<comment type="subcellular location">
    <subcellularLocation>
        <location evidence="15">Synapse</location>
    </subcellularLocation>
    <subcellularLocation>
        <location evidence="9">Cell projection</location>
        <location evidence="9">Axon</location>
    </subcellularLocation>
    <subcellularLocation>
        <location evidence="7 9">Cell projection</location>
        <location evidence="7 9">Dendrite</location>
    </subcellularLocation>
    <subcellularLocation>
        <location evidence="7">Cell projection</location>
        <location evidence="7">Dendritic spine</location>
    </subcellularLocation>
    <subcellularLocation>
        <location evidence="7 9">Endoplasmic reticulum membrane</location>
        <topology evidence="3">Multi-pass membrane protein</topology>
    </subcellularLocation>
    <text evidence="9">Localized in the soma and dendritic and axonal projections.</text>
</comment>
<comment type="tissue specificity">
    <text evidence="4 6 7 8 9 12">Predominantly expressed in brain (at protein level) and testis, highly expressed in the hippocampus, amygdala and cerebellum (PubMed:12376098, PubMed:18192268, PubMed:22539351, PubMed:22632720, PubMed:25751282, PubMed:37309891). Expressed in neurons but not astrocytes (PubMed:18192268, PubMed:22539351, PubMed:25751282). Expressed in the ventral horn from spinal cords (PubMed:25751282).</text>
</comment>
<comment type="domain">
    <text evidence="2">CPT1 enzymes are comprised of an N-terminal regulatory domain and a C-terminal catalytic domain that are separated by two transmembrane helices. In CPT1A, the regulatory domain, termed N, adopts a malonyl-CoA inhibitory and non-inhibitory state, Nalpha and Nbeta, respectively, which differ in their association with the catalytic domain. In CPT1C, the inhibitory Nalpha state is structurally homolog whereas the non-inhibitory Nbeta state is severely destabilized which probably contributes to the low catalytic activity of CPT1C relative to CPT1A and makes its association with the catalytic domain unlikely.</text>
</comment>
<comment type="disruption phenotype">
    <text evidence="5 12">Knockout mice show decreased food intake but higher susceptibility to obesity and diabetes when fed a high fat diet (PubMed:16651524). Mutant mice show extensive learning and memory deficits, they exhibit impaired motor and instrumental learning as well as detrimental hippocampus-dependent spatial and habituation memory (PubMed:37309891).</text>
</comment>
<comment type="similarity">
    <text evidence="14">Belongs to the carnitine/choline acetyltransferase family.</text>
</comment>
<comment type="caution">
    <text evidence="4 10">In contrast to its paralogs, CPT1A and CPT1B, does not have, or at very low levels, carnitine O-palmitoyltransferase activity (EC:2.3.1.21) in vivo, being unable to catalyze the transfer of the acyl group of long-chain fatty acid-CoA conjugates onto carnitine. This is in agreement with its expression specific to neurons which is a cell-type that does not use fatty acids as fuel to any major extent and the fact that it locates to endoplasmic reticulum instead of mitochondria.</text>
</comment>
<reference key="1">
    <citation type="journal article" date="2002" name="Genomics">
        <title>A novel brain-expressed protein related to carnitine palmitoyltransferase I.</title>
        <authorList>
            <person name="Price N."/>
            <person name="van der Leij F.R."/>
            <person name="Jackson V."/>
            <person name="Corstorphine C."/>
            <person name="Thomson R."/>
            <person name="Sorensen A."/>
            <person name="Zammit V."/>
        </authorList>
    </citation>
    <scope>NUCLEOTIDE SEQUENCE [MRNA]</scope>
    <scope>TISSUE SPECIFICITY</scope>
    <scope>FUNCTION</scope>
    <scope>CAUTION</scope>
    <scope>MALONYL-COA BINDING</scope>
    <source>
        <strain>C57BL/6J</strain>
        <tissue>Embryo</tissue>
    </source>
</reference>
<reference key="2">
    <citation type="journal article" date="2005" name="Science">
        <title>The transcriptional landscape of the mammalian genome.</title>
        <authorList>
            <person name="Carninci P."/>
            <person name="Kasukawa T."/>
            <person name="Katayama S."/>
            <person name="Gough J."/>
            <person name="Frith M.C."/>
            <person name="Maeda N."/>
            <person name="Oyama R."/>
            <person name="Ravasi T."/>
            <person name="Lenhard B."/>
            <person name="Wells C."/>
            <person name="Kodzius R."/>
            <person name="Shimokawa K."/>
            <person name="Bajic V.B."/>
            <person name="Brenner S.E."/>
            <person name="Batalov S."/>
            <person name="Forrest A.R."/>
            <person name="Zavolan M."/>
            <person name="Davis M.J."/>
            <person name="Wilming L.G."/>
            <person name="Aidinis V."/>
            <person name="Allen J.E."/>
            <person name="Ambesi-Impiombato A."/>
            <person name="Apweiler R."/>
            <person name="Aturaliya R.N."/>
            <person name="Bailey T.L."/>
            <person name="Bansal M."/>
            <person name="Baxter L."/>
            <person name="Beisel K.W."/>
            <person name="Bersano T."/>
            <person name="Bono H."/>
            <person name="Chalk A.M."/>
            <person name="Chiu K.P."/>
            <person name="Choudhary V."/>
            <person name="Christoffels A."/>
            <person name="Clutterbuck D.R."/>
            <person name="Crowe M.L."/>
            <person name="Dalla E."/>
            <person name="Dalrymple B.P."/>
            <person name="de Bono B."/>
            <person name="Della Gatta G."/>
            <person name="di Bernardo D."/>
            <person name="Down T."/>
            <person name="Engstrom P."/>
            <person name="Fagiolini M."/>
            <person name="Faulkner G."/>
            <person name="Fletcher C.F."/>
            <person name="Fukushima T."/>
            <person name="Furuno M."/>
            <person name="Futaki S."/>
            <person name="Gariboldi M."/>
            <person name="Georgii-Hemming P."/>
            <person name="Gingeras T.R."/>
            <person name="Gojobori T."/>
            <person name="Green R.E."/>
            <person name="Gustincich S."/>
            <person name="Harbers M."/>
            <person name="Hayashi Y."/>
            <person name="Hensch T.K."/>
            <person name="Hirokawa N."/>
            <person name="Hill D."/>
            <person name="Huminiecki L."/>
            <person name="Iacono M."/>
            <person name="Ikeo K."/>
            <person name="Iwama A."/>
            <person name="Ishikawa T."/>
            <person name="Jakt M."/>
            <person name="Kanapin A."/>
            <person name="Katoh M."/>
            <person name="Kawasawa Y."/>
            <person name="Kelso J."/>
            <person name="Kitamura H."/>
            <person name="Kitano H."/>
            <person name="Kollias G."/>
            <person name="Krishnan S.P."/>
            <person name="Kruger A."/>
            <person name="Kummerfeld S.K."/>
            <person name="Kurochkin I.V."/>
            <person name="Lareau L.F."/>
            <person name="Lazarevic D."/>
            <person name="Lipovich L."/>
            <person name="Liu J."/>
            <person name="Liuni S."/>
            <person name="McWilliam S."/>
            <person name="Madan Babu M."/>
            <person name="Madera M."/>
            <person name="Marchionni L."/>
            <person name="Matsuda H."/>
            <person name="Matsuzawa S."/>
            <person name="Miki H."/>
            <person name="Mignone F."/>
            <person name="Miyake S."/>
            <person name="Morris K."/>
            <person name="Mottagui-Tabar S."/>
            <person name="Mulder N."/>
            <person name="Nakano N."/>
            <person name="Nakauchi H."/>
            <person name="Ng P."/>
            <person name="Nilsson R."/>
            <person name="Nishiguchi S."/>
            <person name="Nishikawa S."/>
            <person name="Nori F."/>
            <person name="Ohara O."/>
            <person name="Okazaki Y."/>
            <person name="Orlando V."/>
            <person name="Pang K.C."/>
            <person name="Pavan W.J."/>
            <person name="Pavesi G."/>
            <person name="Pesole G."/>
            <person name="Petrovsky N."/>
            <person name="Piazza S."/>
            <person name="Reed J."/>
            <person name="Reid J.F."/>
            <person name="Ring B.Z."/>
            <person name="Ringwald M."/>
            <person name="Rost B."/>
            <person name="Ruan Y."/>
            <person name="Salzberg S.L."/>
            <person name="Sandelin A."/>
            <person name="Schneider C."/>
            <person name="Schoenbach C."/>
            <person name="Sekiguchi K."/>
            <person name="Semple C.A."/>
            <person name="Seno S."/>
            <person name="Sessa L."/>
            <person name="Sheng Y."/>
            <person name="Shibata Y."/>
            <person name="Shimada H."/>
            <person name="Shimada K."/>
            <person name="Silva D."/>
            <person name="Sinclair B."/>
            <person name="Sperling S."/>
            <person name="Stupka E."/>
            <person name="Sugiura K."/>
            <person name="Sultana R."/>
            <person name="Takenaka Y."/>
            <person name="Taki K."/>
            <person name="Tammoja K."/>
            <person name="Tan S.L."/>
            <person name="Tang S."/>
            <person name="Taylor M.S."/>
            <person name="Tegner J."/>
            <person name="Teichmann S.A."/>
            <person name="Ueda H.R."/>
            <person name="van Nimwegen E."/>
            <person name="Verardo R."/>
            <person name="Wei C.L."/>
            <person name="Yagi K."/>
            <person name="Yamanishi H."/>
            <person name="Zabarovsky E."/>
            <person name="Zhu S."/>
            <person name="Zimmer A."/>
            <person name="Hide W."/>
            <person name="Bult C."/>
            <person name="Grimmond S.M."/>
            <person name="Teasdale R.D."/>
            <person name="Liu E.T."/>
            <person name="Brusic V."/>
            <person name="Quackenbush J."/>
            <person name="Wahlestedt C."/>
            <person name="Mattick J.S."/>
            <person name="Hume D.A."/>
            <person name="Kai C."/>
            <person name="Sasaki D."/>
            <person name="Tomaru Y."/>
            <person name="Fukuda S."/>
            <person name="Kanamori-Katayama M."/>
            <person name="Suzuki M."/>
            <person name="Aoki J."/>
            <person name="Arakawa T."/>
            <person name="Iida J."/>
            <person name="Imamura K."/>
            <person name="Itoh M."/>
            <person name="Kato T."/>
            <person name="Kawaji H."/>
            <person name="Kawagashira N."/>
            <person name="Kawashima T."/>
            <person name="Kojima M."/>
            <person name="Kondo S."/>
            <person name="Konno H."/>
            <person name="Nakano K."/>
            <person name="Ninomiya N."/>
            <person name="Nishio T."/>
            <person name="Okada M."/>
            <person name="Plessy C."/>
            <person name="Shibata K."/>
            <person name="Shiraki T."/>
            <person name="Suzuki S."/>
            <person name="Tagami M."/>
            <person name="Waki K."/>
            <person name="Watahiki A."/>
            <person name="Okamura-Oho Y."/>
            <person name="Suzuki H."/>
            <person name="Kawai J."/>
            <person name="Hayashizaki Y."/>
        </authorList>
    </citation>
    <scope>NUCLEOTIDE SEQUENCE [LARGE SCALE MRNA]</scope>
    <source>
        <strain>C57BL/6J</strain>
        <tissue>Cerebellum</tissue>
        <tissue>Medulla oblongata</tissue>
    </source>
</reference>
<reference key="3">
    <citation type="journal article" date="2004" name="Genome Res.">
        <title>The status, quality, and expansion of the NIH full-length cDNA project: the Mammalian Gene Collection (MGC).</title>
        <authorList>
            <consortium name="The MGC Project Team"/>
        </authorList>
    </citation>
    <scope>NUCLEOTIDE SEQUENCE [LARGE SCALE MRNA]</scope>
    <source>
        <strain>CD-1</strain>
        <tissue>Neural stem cell</tissue>
    </source>
</reference>
<reference key="4">
    <citation type="journal article" date="2006" name="Proc. Natl. Acad. Sci. U.S.A.">
        <title>The brain-specific carnitine palmitoyltransferase-1c regulates energy homeostasis.</title>
        <authorList>
            <person name="Wolfgang M.J."/>
            <person name="Kurama T."/>
            <person name="Dai Y."/>
            <person name="Suwa A."/>
            <person name="Asaumi M."/>
            <person name="Matsumoto S."/>
            <person name="Cha S.H."/>
            <person name="Shimokawa T."/>
            <person name="Lane M.D."/>
        </authorList>
    </citation>
    <scope>FUNCTION</scope>
    <scope>DISRUPTION PHENOTYPE</scope>
</reference>
<reference key="5">
    <citation type="journal article" date="2008" name="J. Biol. Chem.">
        <title>CPT1c is localized in endoplasmic reticulum of neurons and has carnitine palmitoyltransferase activity.</title>
        <authorList>
            <person name="Sierra A.Y."/>
            <person name="Gratacos E."/>
            <person name="Carrasco P."/>
            <person name="Clotet J."/>
            <person name="Urena J."/>
            <person name="Serra D."/>
            <person name="Asins G."/>
            <person name="Hegardt F.G."/>
            <person name="Casals N."/>
        </authorList>
    </citation>
    <scope>TISSUE SPECIFICITY</scope>
</reference>
<reference key="6">
    <citation type="journal article" date="2010" name="Cell">
        <title>A tissue-specific atlas of mouse protein phosphorylation and expression.</title>
        <authorList>
            <person name="Huttlin E.L."/>
            <person name="Jedrychowski M.P."/>
            <person name="Elias J.E."/>
            <person name="Goswami T."/>
            <person name="Rad R."/>
            <person name="Beausoleil S.A."/>
            <person name="Villen J."/>
            <person name="Haas W."/>
            <person name="Sowa M.E."/>
            <person name="Gygi S.P."/>
        </authorList>
    </citation>
    <scope>IDENTIFICATION BY MASS SPECTROMETRY [LARGE SCALE ANALYSIS]</scope>
    <source>
        <tissue>Brain</tissue>
        <tissue>Testis</tissue>
    </source>
</reference>
<reference key="7">
    <citation type="journal article" date="2012" name="J. Biol. Chem.">
        <title>Ceramide levels regulated by carnitine palmitoyltransferase 1C control dendritic spine maturation and cognition.</title>
        <authorList>
            <person name="Carrasco P."/>
            <person name="Sahun I."/>
            <person name="McDonald J."/>
            <person name="Ramirez S."/>
            <person name="Jacas J."/>
            <person name="Gratacos E."/>
            <person name="Sierra A.Y."/>
            <person name="Serra D."/>
            <person name="Herrero L."/>
            <person name="Acker-Palmer A."/>
            <person name="Hegardt F.G."/>
            <person name="Dierssen M."/>
            <person name="Casals N."/>
        </authorList>
    </citation>
    <scope>FUNCTION</scope>
    <scope>SUBCELLULAR LOCATION</scope>
    <scope>TISSUE SPECIFICITY</scope>
</reference>
<reference key="8">
    <citation type="journal article" date="2012" name="Neuron">
        <title>High-resolution proteomics unravel architecture and molecular diversity of native AMPA receptor complexes.</title>
        <authorList>
            <person name="Schwenk J."/>
            <person name="Harmel N."/>
            <person name="Brechet A."/>
            <person name="Zolles G."/>
            <person name="Berkefeld H."/>
            <person name="Muller C.S."/>
            <person name="Bildl W."/>
            <person name="Baehrens D."/>
            <person name="Huber B."/>
            <person name="Kulik A."/>
            <person name="Klocker N."/>
            <person name="Schulte U."/>
            <person name="Fakler B."/>
        </authorList>
    </citation>
    <scope>IDENTIFICATION IN AMPAR COMPLEX</scope>
    <scope>SUBCELLULAR LOCATION</scope>
    <scope>TISSUE SPECIFICITY</scope>
</reference>
<reference key="9">
    <citation type="journal article" date="2015" name="JAMA Neurol.">
        <title>Mutation in CPT1C Associated with pure autosomal dominant spastic paraplegia.</title>
        <authorList>
            <person name="Rinaldi C."/>
            <person name="Schmidt T."/>
            <person name="Situ A.J."/>
            <person name="Johnson J.O."/>
            <person name="Lee P.R."/>
            <person name="Chen K.L."/>
            <person name="Bott L.C."/>
            <person name="Fado R."/>
            <person name="Harmison G.H."/>
            <person name="Parodi S."/>
            <person name="Grunseich C."/>
            <person name="Renvoise B."/>
            <person name="Biesecker L.G."/>
            <person name="De Michele G."/>
            <person name="Santorelli F.M."/>
            <person name="Filla A."/>
            <person name="Stevanin G."/>
            <person name="Duerr A."/>
            <person name="Brice A."/>
            <person name="Casals N."/>
            <person name="Traynor B.J."/>
            <person name="Blackstone C."/>
            <person name="Ulmer T.S."/>
            <person name="Fischbeck K.H."/>
        </authorList>
    </citation>
    <scope>SUBCELLULAR LOCATION</scope>
    <scope>TISSUE SPECIFICITY</scope>
    <scope>FUNCTION</scope>
    <scope>CAUTION</scope>
</reference>
<reference key="10">
    <citation type="journal article" date="2018" name="Front. Mol. Neurosci.">
        <title>Mechanisms of CPT1C-Dependent AMPAR Trafficking Enhancement.</title>
        <authorList>
            <person name="Gratacos-Batlle E."/>
            <person name="Olivella M."/>
            <person name="Sanchez-Fernandez N."/>
            <person name="Yefimenko N."/>
            <person name="Miguez-Cabello F."/>
            <person name="Fado R."/>
            <person name="Casals N."/>
            <person name="Gasull X."/>
            <person name="Ambrosio S."/>
            <person name="Soto D."/>
        </authorList>
    </citation>
    <scope>FUNCTION</scope>
    <scope>CAUTION</scope>
</reference>
<reference key="11">
    <citation type="journal article" date="2020" name="J. Cell Biol.">
        <title>Sensing of nutrients by CPT1C controls SAC1 activity to regulate AMPA receptor trafficking.</title>
        <authorList>
            <person name="Casas M."/>
            <person name="Fado R."/>
            <person name="Dominguez J.L."/>
            <person name="Roig A."/>
            <person name="Kaku M."/>
            <person name="Chohnan S."/>
            <person name="Sole M."/>
            <person name="Unzeta M."/>
            <person name="Minano-Molina A.J."/>
            <person name="Rodriguez-Alvarez J."/>
            <person name="Dickson E.J."/>
            <person name="Casals N."/>
        </authorList>
    </citation>
    <scope>FUNCTION</scope>
    <scope>INTERACTION WITH AMPAR COMPLEX AND SACM1L</scope>
    <scope>MALONYL-COA BINDING</scope>
    <scope>MUTAGENESIS OF MET-589</scope>
</reference>
<reference key="12">
    <citation type="journal article" date="2023" name="J. Physiol. (Lond.)">
        <title>CPT1C is required for synaptic plasticity and oscillatory activity that supports motor, associative and non-associative learning.</title>
        <authorList>
            <person name="Iborra-Lazaro G."/>
            <person name="Djebari S."/>
            <person name="Sanchez-Rodriguez I."/>
            <person name="Gratacos-Batlle E."/>
            <person name="Sanchez-Fernandez N."/>
            <person name="Radosevic M."/>
            <person name="Casals N."/>
            <person name="Navarro-Lopez J.D."/>
            <person name="Soto Del Cerro D."/>
            <person name="Jimenez-Diaz L."/>
        </authorList>
    </citation>
    <scope>DISRUPTION PHENOTYPE</scope>
    <scope>FUNCTION</scope>
    <scope>TISSUE SPECIFICITY</scope>
</reference>
<proteinExistence type="evidence at protein level"/>
<feature type="chain" id="PRO_0000210167" description="Palmitoyl thioesterase CPT1C">
    <location>
        <begin position="1"/>
        <end position="798"/>
    </location>
</feature>
<feature type="topological domain" description="Cytoplasmic" evidence="3">
    <location>
        <begin position="1"/>
        <end position="52"/>
    </location>
</feature>
<feature type="transmembrane region" description="Helical" evidence="3">
    <location>
        <begin position="53"/>
        <end position="75"/>
    </location>
</feature>
<feature type="topological domain" description="Lumenal" evidence="3">
    <location>
        <begin position="76"/>
        <end position="103"/>
    </location>
</feature>
<feature type="transmembrane region" description="Helical" evidence="3">
    <location>
        <begin position="104"/>
        <end position="126"/>
    </location>
</feature>
<feature type="topological domain" description="Cytoplasmic" evidence="3">
    <location>
        <begin position="127"/>
        <end position="798"/>
    </location>
</feature>
<feature type="region of interest" description="Required for interaction with GRIA1" evidence="11">
    <location>
        <begin position="759"/>
        <end position="798"/>
    </location>
</feature>
<feature type="active site" description="Proton acceptor" evidence="2">
    <location>
        <position position="469"/>
    </location>
</feature>
<feature type="binding site" evidence="1">
    <location>
        <begin position="551"/>
        <end position="563"/>
    </location>
    <ligand>
        <name>CoA</name>
        <dbReference type="ChEBI" id="CHEBI:57287"/>
    </ligand>
</feature>
<feature type="binding site" evidence="1">
    <location>
        <position position="585"/>
    </location>
    <ligand>
        <name>(R)-carnitine</name>
        <dbReference type="ChEBI" id="CHEBI:16347"/>
    </ligand>
</feature>
<feature type="binding site" evidence="1">
    <location>
        <position position="587"/>
    </location>
    <ligand>
        <name>(R)-carnitine</name>
        <dbReference type="ChEBI" id="CHEBI:16347"/>
    </ligand>
</feature>
<feature type="binding site" evidence="1">
    <location>
        <position position="598"/>
    </location>
    <ligand>
        <name>(R)-carnitine</name>
        <dbReference type="ChEBI" id="CHEBI:16347"/>
    </ligand>
</feature>
<feature type="mutagenesis site" description="Loss of binding to malonyl-CoA. Loss of regulation of SACM1L phosphatidylinositol-3-phosphatase activity. No effect on interaction with GRIA1." evidence="11">
    <original>M</original>
    <variation>S</variation>
    <location>
        <position position="589"/>
    </location>
</feature>
<feature type="sequence conflict" description="In Ref. 3; AAH66155." evidence="14" ref="3">
    <original>F</original>
    <variation>L</variation>
    <location>
        <position position="104"/>
    </location>
</feature>
<feature type="sequence conflict" description="In Ref. 3; AAH66155." evidence="14" ref="3">
    <original>G</original>
    <variation>R</variation>
    <location>
        <position position="195"/>
    </location>
</feature>
<feature type="sequence conflict" description="In Ref. 3; AAH66155." evidence="14" ref="3">
    <original>R</original>
    <variation>C</variation>
    <location>
        <position position="324"/>
    </location>
</feature>
<feature type="sequence conflict" description="In Ref. 3; AAH66155." evidence="14" ref="3">
    <original>H</original>
    <variation>Q</variation>
    <location>
        <position position="559"/>
    </location>
</feature>
<gene>
    <name type="primary">Cpt1c</name>
</gene>
<protein>
    <recommendedName>
        <fullName>Palmitoyl thioesterase CPT1C</fullName>
        <ecNumber evidence="2">3.1.2.22</ecNumber>
    </recommendedName>
    <alternativeName>
        <fullName>Carnitine O-palmitoyltransferase 1, brain isoform</fullName>
        <shortName>CPTI-B</shortName>
    </alternativeName>
    <alternativeName>
        <fullName>Carnitine palmitoyltransferase 1C</fullName>
    </alternativeName>
    <alternativeName>
        <fullName evidence="13">Carnitine palmitoyltransferase I</fullName>
        <shortName evidence="13">CPT I-C</shortName>
    </alternativeName>
</protein>
<dbReference type="EC" id="3.1.2.22" evidence="2"/>
<dbReference type="EMBL" id="AF320000">
    <property type="protein sequence ID" value="AAN39013.1"/>
    <property type="molecule type" value="mRNA"/>
</dbReference>
<dbReference type="EMBL" id="AK032101">
    <property type="protein sequence ID" value="BAC27700.1"/>
    <property type="molecule type" value="mRNA"/>
</dbReference>
<dbReference type="EMBL" id="AK035790">
    <property type="protein sequence ID" value="BAC29187.1"/>
    <property type="molecule type" value="mRNA"/>
</dbReference>
<dbReference type="EMBL" id="BC066155">
    <property type="protein sequence ID" value="AAH66155.1"/>
    <property type="molecule type" value="mRNA"/>
</dbReference>
<dbReference type="CCDS" id="CCDS21221.1"/>
<dbReference type="RefSeq" id="NP_001239399.1">
    <property type="nucleotide sequence ID" value="NM_001252470.1"/>
</dbReference>
<dbReference type="RefSeq" id="NP_710146.1">
    <property type="nucleotide sequence ID" value="NM_153679.2"/>
</dbReference>
<dbReference type="SMR" id="Q8BGD5"/>
<dbReference type="BioGRID" id="219139">
    <property type="interactions" value="4"/>
</dbReference>
<dbReference type="FunCoup" id="Q8BGD5">
    <property type="interactions" value="597"/>
</dbReference>
<dbReference type="STRING" id="10090.ENSMUSP00000069539"/>
<dbReference type="GlyGen" id="Q8BGD5">
    <property type="glycosylation" value="2 sites, 1 O-linked glycan (1 site)"/>
</dbReference>
<dbReference type="iPTMnet" id="Q8BGD5"/>
<dbReference type="PhosphoSitePlus" id="Q8BGD5"/>
<dbReference type="SwissPalm" id="Q8BGD5"/>
<dbReference type="PaxDb" id="10090-ENSMUSP00000069539"/>
<dbReference type="PeptideAtlas" id="Q8BGD5"/>
<dbReference type="ProteomicsDB" id="285260"/>
<dbReference type="Pumba" id="Q8BGD5"/>
<dbReference type="Antibodypedia" id="3052">
    <property type="antibodies" value="263 antibodies from 32 providers"/>
</dbReference>
<dbReference type="DNASU" id="78070"/>
<dbReference type="Ensembl" id="ENSMUST00000063761.8">
    <property type="protein sequence ID" value="ENSMUSP00000069539.8"/>
    <property type="gene ID" value="ENSMUSG00000007783.11"/>
</dbReference>
<dbReference type="Ensembl" id="ENSMUST00000212836.2">
    <property type="protein sequence ID" value="ENSMUSP00000148815.2"/>
    <property type="gene ID" value="ENSMUSG00000007783.11"/>
</dbReference>
<dbReference type="GeneID" id="78070"/>
<dbReference type="KEGG" id="mmu:78070"/>
<dbReference type="UCSC" id="uc009gsb.2">
    <property type="organism name" value="mouse"/>
</dbReference>
<dbReference type="AGR" id="MGI:2446526"/>
<dbReference type="CTD" id="126129"/>
<dbReference type="MGI" id="MGI:2446526">
    <property type="gene designation" value="Cpt1c"/>
</dbReference>
<dbReference type="VEuPathDB" id="HostDB:ENSMUSG00000007783"/>
<dbReference type="eggNOG" id="KOG3716">
    <property type="taxonomic scope" value="Eukaryota"/>
</dbReference>
<dbReference type="GeneTree" id="ENSGT01130000278324"/>
<dbReference type="HOGENOM" id="CLU_013513_2_1_1"/>
<dbReference type="InParanoid" id="Q8BGD5"/>
<dbReference type="OMA" id="VYSEQWQ"/>
<dbReference type="OrthoDB" id="240216at2759"/>
<dbReference type="PhylomeDB" id="Q8BGD5"/>
<dbReference type="TreeFam" id="TF313836"/>
<dbReference type="BRENDA" id="2.3.1.21">
    <property type="organism ID" value="3474"/>
</dbReference>
<dbReference type="BioGRID-ORCS" id="78070">
    <property type="hits" value="8 hits in 81 CRISPR screens"/>
</dbReference>
<dbReference type="ChiTaRS" id="Cpt1c">
    <property type="organism name" value="mouse"/>
</dbReference>
<dbReference type="PRO" id="PR:Q8BGD5"/>
<dbReference type="Proteomes" id="UP000000589">
    <property type="component" value="Chromosome 7"/>
</dbReference>
<dbReference type="RNAct" id="Q8BGD5">
    <property type="molecule type" value="protein"/>
</dbReference>
<dbReference type="Bgee" id="ENSMUSG00000007783">
    <property type="expression patterns" value="Expressed in humerus cartilage element and 230 other cell types or tissues"/>
</dbReference>
<dbReference type="ExpressionAtlas" id="Q8BGD5">
    <property type="expression patterns" value="baseline and differential"/>
</dbReference>
<dbReference type="GO" id="GO:0032281">
    <property type="term" value="C:AMPA glutamate receptor complex"/>
    <property type="evidence" value="ECO:0000314"/>
    <property type="project" value="MGI"/>
</dbReference>
<dbReference type="GO" id="GO:0030424">
    <property type="term" value="C:axon"/>
    <property type="evidence" value="ECO:0000314"/>
    <property type="project" value="UniProtKB"/>
</dbReference>
<dbReference type="GO" id="GO:0030425">
    <property type="term" value="C:dendrite"/>
    <property type="evidence" value="ECO:0000314"/>
    <property type="project" value="UniProtKB"/>
</dbReference>
<dbReference type="GO" id="GO:0043197">
    <property type="term" value="C:dendritic spine"/>
    <property type="evidence" value="ECO:0007669"/>
    <property type="project" value="UniProtKB-SubCell"/>
</dbReference>
<dbReference type="GO" id="GO:0005783">
    <property type="term" value="C:endoplasmic reticulum"/>
    <property type="evidence" value="ECO:0000314"/>
    <property type="project" value="UniProtKB"/>
</dbReference>
<dbReference type="GO" id="GO:0005789">
    <property type="term" value="C:endoplasmic reticulum membrane"/>
    <property type="evidence" value="ECO:0000314"/>
    <property type="project" value="UniProtKB"/>
</dbReference>
<dbReference type="GO" id="GO:0098978">
    <property type="term" value="C:glutamatergic synapse"/>
    <property type="evidence" value="ECO:0000314"/>
    <property type="project" value="SynGO"/>
</dbReference>
<dbReference type="GO" id="GO:0005739">
    <property type="term" value="C:mitochondrion"/>
    <property type="evidence" value="ECO:0007005"/>
    <property type="project" value="MGI"/>
</dbReference>
<dbReference type="GO" id="GO:0098794">
    <property type="term" value="C:postsynapse"/>
    <property type="evidence" value="ECO:0000314"/>
    <property type="project" value="SynGO"/>
</dbReference>
<dbReference type="GO" id="GO:0016746">
    <property type="term" value="F:acyltransferase activity"/>
    <property type="evidence" value="ECO:0007669"/>
    <property type="project" value="UniProtKB-KW"/>
</dbReference>
<dbReference type="GO" id="GO:0008474">
    <property type="term" value="F:palmitoyl-(protein) hydrolase activity"/>
    <property type="evidence" value="ECO:0000314"/>
    <property type="project" value="UniProtKB"/>
</dbReference>
<dbReference type="GO" id="GO:0006629">
    <property type="term" value="P:lipid metabolic process"/>
    <property type="evidence" value="ECO:0007669"/>
    <property type="project" value="UniProtKB-KW"/>
</dbReference>
<dbReference type="GO" id="GO:0099072">
    <property type="term" value="P:regulation of postsynaptic membrane neurotransmitter receptor levels"/>
    <property type="evidence" value="ECO:0000314"/>
    <property type="project" value="SynGO"/>
</dbReference>
<dbReference type="FunFam" id="3.30.559.70:FF:000008">
    <property type="entry name" value="carnitine O-palmitoyltransferase 1, brain isoform"/>
    <property type="match status" value="1"/>
</dbReference>
<dbReference type="FunFam" id="3.30.559.10:FF:000002">
    <property type="entry name" value="carnitine O-palmitoyltransferase 1, liver isoform"/>
    <property type="match status" value="1"/>
</dbReference>
<dbReference type="Gene3D" id="6.10.250.1760">
    <property type="match status" value="1"/>
</dbReference>
<dbReference type="Gene3D" id="3.30.559.10">
    <property type="entry name" value="Chloramphenicol acetyltransferase-like domain"/>
    <property type="match status" value="1"/>
</dbReference>
<dbReference type="Gene3D" id="3.30.559.70">
    <property type="entry name" value="Choline/Carnitine o-acyltransferase, domain 2"/>
    <property type="match status" value="1"/>
</dbReference>
<dbReference type="InterPro" id="IPR000542">
    <property type="entry name" value="Carn_acyl_trans"/>
</dbReference>
<dbReference type="InterPro" id="IPR023213">
    <property type="entry name" value="CAT-like_dom_sf"/>
</dbReference>
<dbReference type="InterPro" id="IPR039551">
    <property type="entry name" value="Cho/carn_acyl_trans"/>
</dbReference>
<dbReference type="InterPro" id="IPR042231">
    <property type="entry name" value="Cho/carn_acyl_trans_2"/>
</dbReference>
<dbReference type="InterPro" id="IPR032476">
    <property type="entry name" value="CPT_N"/>
</dbReference>
<dbReference type="PANTHER" id="PTHR22589">
    <property type="entry name" value="CARNITINE O-ACYLTRANSFERASE"/>
    <property type="match status" value="1"/>
</dbReference>
<dbReference type="PANTHER" id="PTHR22589:SF55">
    <property type="entry name" value="CARNITINE O-PALMITOYLTRANSFERASE 1, BRAIN ISOFORM"/>
    <property type="match status" value="1"/>
</dbReference>
<dbReference type="Pfam" id="PF00755">
    <property type="entry name" value="Carn_acyltransf"/>
    <property type="match status" value="1"/>
</dbReference>
<dbReference type="Pfam" id="PF16484">
    <property type="entry name" value="CPT_N"/>
    <property type="match status" value="1"/>
</dbReference>
<dbReference type="SUPFAM" id="SSF52777">
    <property type="entry name" value="CoA-dependent acyltransferases"/>
    <property type="match status" value="2"/>
</dbReference>
<dbReference type="PROSITE" id="PS00439">
    <property type="entry name" value="ACYLTRANSF_C_1"/>
    <property type="match status" value="1"/>
</dbReference>
<dbReference type="PROSITE" id="PS00440">
    <property type="entry name" value="ACYLTRANSF_C_2"/>
    <property type="match status" value="1"/>
</dbReference>
<accession>Q8BGD5</accession>
<accession>Q6NZF8</accession>
<accession>Q8C071</accession>